<accession>Q1I5C4</accession>
<protein>
    <recommendedName>
        <fullName evidence="1">UDP-3-O-acyl-N-acetylglucosamine deacetylase</fullName>
        <shortName evidence="1">UDP-3-O-acyl-GlcNAc deacetylase</shortName>
        <ecNumber evidence="1">3.5.1.108</ecNumber>
    </recommendedName>
    <alternativeName>
        <fullName evidence="1">UDP-3-O-[R-3-hydroxymyristoyl]-N-acetylglucosamine deacetylase</fullName>
    </alternativeName>
</protein>
<evidence type="ECO:0000255" key="1">
    <source>
        <dbReference type="HAMAP-Rule" id="MF_00388"/>
    </source>
</evidence>
<sequence length="303" mass="33142">MIRQRTLKNTIRATGVGLHSGEKVYLTLKPAPVDTGIVFRRADLSPVVEIPARAANVGETTMSTTLVNGDVKVDTVEHLLSAMAGLGIDNAYVELSASEVPIMDGSAGPFVFLIQSAGLEEQDAPKKFIRILREVTVEDGDKRATFLPFDGFKVSFEIDFDHPVLKGQTQSASVDFSSTSFVKEVSRARTFGFMRDIEYLRKHNLALGGSVENAIVVDETGVLNEDGLRSEDEFVKHKILDAIGDLYLLGNSLIGEFKGYKSGHSLNNQLLRKLIAETDAWEVVFFEDASTAPISYMRPVAAV</sequence>
<keyword id="KW-0378">Hydrolase</keyword>
<keyword id="KW-0441">Lipid A biosynthesis</keyword>
<keyword id="KW-0444">Lipid biosynthesis</keyword>
<keyword id="KW-0443">Lipid metabolism</keyword>
<keyword id="KW-0479">Metal-binding</keyword>
<keyword id="KW-0862">Zinc</keyword>
<comment type="function">
    <text evidence="1">Catalyzes the hydrolysis of UDP-3-O-myristoyl-N-acetylglucosamine to form UDP-3-O-myristoylglucosamine and acetate, the committed step in lipid A biosynthesis.</text>
</comment>
<comment type="catalytic activity">
    <reaction evidence="1">
        <text>a UDP-3-O-[(3R)-3-hydroxyacyl]-N-acetyl-alpha-D-glucosamine + H2O = a UDP-3-O-[(3R)-3-hydroxyacyl]-alpha-D-glucosamine + acetate</text>
        <dbReference type="Rhea" id="RHEA:67816"/>
        <dbReference type="ChEBI" id="CHEBI:15377"/>
        <dbReference type="ChEBI" id="CHEBI:30089"/>
        <dbReference type="ChEBI" id="CHEBI:137740"/>
        <dbReference type="ChEBI" id="CHEBI:173225"/>
        <dbReference type="EC" id="3.5.1.108"/>
    </reaction>
</comment>
<comment type="cofactor">
    <cofactor evidence="1">
        <name>Zn(2+)</name>
        <dbReference type="ChEBI" id="CHEBI:29105"/>
    </cofactor>
</comment>
<comment type="pathway">
    <text evidence="1">Glycolipid biosynthesis; lipid IV(A) biosynthesis; lipid IV(A) from (3R)-3-hydroxytetradecanoyl-[acyl-carrier-protein] and UDP-N-acetyl-alpha-D-glucosamine: step 2/6.</text>
</comment>
<comment type="similarity">
    <text evidence="1">Belongs to the LpxC family.</text>
</comment>
<proteinExistence type="inferred from homology"/>
<reference key="1">
    <citation type="journal article" date="2006" name="Nat. Biotechnol.">
        <title>Complete genome sequence of the entomopathogenic and metabolically versatile soil bacterium Pseudomonas entomophila.</title>
        <authorList>
            <person name="Vodovar N."/>
            <person name="Vallenet D."/>
            <person name="Cruveiller S."/>
            <person name="Rouy Z."/>
            <person name="Barbe V."/>
            <person name="Acosta C."/>
            <person name="Cattolico L."/>
            <person name="Jubin C."/>
            <person name="Lajus A."/>
            <person name="Segurens B."/>
            <person name="Vacherie B."/>
            <person name="Wincker P."/>
            <person name="Weissenbach J."/>
            <person name="Lemaitre B."/>
            <person name="Medigue C."/>
            <person name="Boccard F."/>
        </authorList>
    </citation>
    <scope>NUCLEOTIDE SEQUENCE [LARGE SCALE GENOMIC DNA]</scope>
    <source>
        <strain>L48</strain>
    </source>
</reference>
<gene>
    <name evidence="1" type="primary">lpxC</name>
    <name type="ordered locus">PSEEN4479</name>
</gene>
<dbReference type="EC" id="3.5.1.108" evidence="1"/>
<dbReference type="EMBL" id="CT573326">
    <property type="protein sequence ID" value="CAK17161.1"/>
    <property type="molecule type" value="Genomic_DNA"/>
</dbReference>
<dbReference type="RefSeq" id="WP_011535531.1">
    <property type="nucleotide sequence ID" value="NC_008027.1"/>
</dbReference>
<dbReference type="SMR" id="Q1I5C4"/>
<dbReference type="STRING" id="384676.PSEEN4479"/>
<dbReference type="GeneID" id="32807475"/>
<dbReference type="KEGG" id="pen:PSEEN4479"/>
<dbReference type="eggNOG" id="COG0774">
    <property type="taxonomic scope" value="Bacteria"/>
</dbReference>
<dbReference type="HOGENOM" id="CLU_046528_1_0_6"/>
<dbReference type="OrthoDB" id="9802746at2"/>
<dbReference type="UniPathway" id="UPA00359">
    <property type="reaction ID" value="UER00478"/>
</dbReference>
<dbReference type="Proteomes" id="UP000000658">
    <property type="component" value="Chromosome"/>
</dbReference>
<dbReference type="GO" id="GO:0016020">
    <property type="term" value="C:membrane"/>
    <property type="evidence" value="ECO:0007669"/>
    <property type="project" value="GOC"/>
</dbReference>
<dbReference type="GO" id="GO:0046872">
    <property type="term" value="F:metal ion binding"/>
    <property type="evidence" value="ECO:0007669"/>
    <property type="project" value="UniProtKB-KW"/>
</dbReference>
<dbReference type="GO" id="GO:0103117">
    <property type="term" value="F:UDP-3-O-acyl-N-acetylglucosamine deacetylase activity"/>
    <property type="evidence" value="ECO:0007669"/>
    <property type="project" value="UniProtKB-UniRule"/>
</dbReference>
<dbReference type="GO" id="GO:0009245">
    <property type="term" value="P:lipid A biosynthetic process"/>
    <property type="evidence" value="ECO:0007669"/>
    <property type="project" value="UniProtKB-UniRule"/>
</dbReference>
<dbReference type="FunFam" id="3.30.230.20:FF:000001">
    <property type="entry name" value="UDP-3-O-acyl-N-acetylglucosamine deacetylase"/>
    <property type="match status" value="1"/>
</dbReference>
<dbReference type="Gene3D" id="3.30.230.20">
    <property type="entry name" value="lpxc deacetylase, domain 1"/>
    <property type="match status" value="1"/>
</dbReference>
<dbReference type="Gene3D" id="3.30.1700.10">
    <property type="entry name" value="lpxc deacetylase, domain 2"/>
    <property type="match status" value="1"/>
</dbReference>
<dbReference type="HAMAP" id="MF_00388">
    <property type="entry name" value="LpxC"/>
    <property type="match status" value="1"/>
</dbReference>
<dbReference type="InterPro" id="IPR020568">
    <property type="entry name" value="Ribosomal_Su5_D2-typ_SF"/>
</dbReference>
<dbReference type="InterPro" id="IPR004463">
    <property type="entry name" value="UDP-acyl_GlcNac_deAcase"/>
</dbReference>
<dbReference type="InterPro" id="IPR011334">
    <property type="entry name" value="UDP-acyl_GlcNac_deAcase_C"/>
</dbReference>
<dbReference type="InterPro" id="IPR015870">
    <property type="entry name" value="UDP-acyl_N-AcGlcN_deAcase_N"/>
</dbReference>
<dbReference type="NCBIfam" id="TIGR00325">
    <property type="entry name" value="lpxC"/>
    <property type="match status" value="1"/>
</dbReference>
<dbReference type="PANTHER" id="PTHR33694">
    <property type="entry name" value="UDP-3-O-ACYL-N-ACETYLGLUCOSAMINE DEACETYLASE 1, MITOCHONDRIAL-RELATED"/>
    <property type="match status" value="1"/>
</dbReference>
<dbReference type="PANTHER" id="PTHR33694:SF1">
    <property type="entry name" value="UDP-3-O-ACYL-N-ACETYLGLUCOSAMINE DEACETYLASE 1, MITOCHONDRIAL-RELATED"/>
    <property type="match status" value="1"/>
</dbReference>
<dbReference type="Pfam" id="PF03331">
    <property type="entry name" value="LpxC"/>
    <property type="match status" value="1"/>
</dbReference>
<dbReference type="SUPFAM" id="SSF54211">
    <property type="entry name" value="Ribosomal protein S5 domain 2-like"/>
    <property type="match status" value="2"/>
</dbReference>
<feature type="chain" id="PRO_1000013219" description="UDP-3-O-acyl-N-acetylglucosamine deacetylase">
    <location>
        <begin position="1"/>
        <end position="303"/>
    </location>
</feature>
<feature type="active site" description="Proton donor" evidence="1">
    <location>
        <position position="264"/>
    </location>
</feature>
<feature type="binding site" evidence="1">
    <location>
        <position position="78"/>
    </location>
    <ligand>
        <name>Zn(2+)</name>
        <dbReference type="ChEBI" id="CHEBI:29105"/>
    </ligand>
</feature>
<feature type="binding site" evidence="1">
    <location>
        <position position="237"/>
    </location>
    <ligand>
        <name>Zn(2+)</name>
        <dbReference type="ChEBI" id="CHEBI:29105"/>
    </ligand>
</feature>
<feature type="binding site" evidence="1">
    <location>
        <position position="241"/>
    </location>
    <ligand>
        <name>Zn(2+)</name>
        <dbReference type="ChEBI" id="CHEBI:29105"/>
    </ligand>
</feature>
<organism>
    <name type="scientific">Pseudomonas entomophila (strain L48)</name>
    <dbReference type="NCBI Taxonomy" id="384676"/>
    <lineage>
        <taxon>Bacteria</taxon>
        <taxon>Pseudomonadati</taxon>
        <taxon>Pseudomonadota</taxon>
        <taxon>Gammaproteobacteria</taxon>
        <taxon>Pseudomonadales</taxon>
        <taxon>Pseudomonadaceae</taxon>
        <taxon>Pseudomonas</taxon>
    </lineage>
</organism>
<name>LPXC_PSEE4</name>